<protein>
    <recommendedName>
        <fullName evidence="1">ATP synthase subunit c</fullName>
    </recommendedName>
    <alternativeName>
        <fullName evidence="1">ATP synthase F(0) sector subunit c</fullName>
    </alternativeName>
    <alternativeName>
        <fullName evidence="1">F-type ATPase subunit c</fullName>
        <shortName evidence="1">F-ATPase subunit c</shortName>
    </alternativeName>
    <alternativeName>
        <fullName evidence="1">Lipid-binding protein</fullName>
    </alternativeName>
</protein>
<dbReference type="EMBL" id="CP000921">
    <property type="protein sequence ID" value="ACO23656.1"/>
    <property type="molecule type" value="Genomic_DNA"/>
</dbReference>
<dbReference type="RefSeq" id="WP_001054562.1">
    <property type="nucleotide sequence ID" value="NC_012469.1"/>
</dbReference>
<dbReference type="SMR" id="C1CSD4"/>
<dbReference type="KEGG" id="snt:SPT_1450"/>
<dbReference type="HOGENOM" id="CLU_148047_5_2_9"/>
<dbReference type="GO" id="GO:0005886">
    <property type="term" value="C:plasma membrane"/>
    <property type="evidence" value="ECO:0007669"/>
    <property type="project" value="UniProtKB-SubCell"/>
</dbReference>
<dbReference type="GO" id="GO:0045259">
    <property type="term" value="C:proton-transporting ATP synthase complex"/>
    <property type="evidence" value="ECO:0007669"/>
    <property type="project" value="UniProtKB-KW"/>
</dbReference>
<dbReference type="GO" id="GO:0033177">
    <property type="term" value="C:proton-transporting two-sector ATPase complex, proton-transporting domain"/>
    <property type="evidence" value="ECO:0007669"/>
    <property type="project" value="InterPro"/>
</dbReference>
<dbReference type="GO" id="GO:0008289">
    <property type="term" value="F:lipid binding"/>
    <property type="evidence" value="ECO:0007669"/>
    <property type="project" value="UniProtKB-KW"/>
</dbReference>
<dbReference type="GO" id="GO:0046933">
    <property type="term" value="F:proton-transporting ATP synthase activity, rotational mechanism"/>
    <property type="evidence" value="ECO:0007669"/>
    <property type="project" value="UniProtKB-UniRule"/>
</dbReference>
<dbReference type="CDD" id="cd18121">
    <property type="entry name" value="ATP-synt_Fo_c"/>
    <property type="match status" value="1"/>
</dbReference>
<dbReference type="FunFam" id="1.20.20.10:FF:000017">
    <property type="entry name" value="ATP synthase subunit c"/>
    <property type="match status" value="1"/>
</dbReference>
<dbReference type="Gene3D" id="1.20.20.10">
    <property type="entry name" value="F1F0 ATP synthase subunit C"/>
    <property type="match status" value="1"/>
</dbReference>
<dbReference type="HAMAP" id="MF_01396">
    <property type="entry name" value="ATP_synth_c_bact"/>
    <property type="match status" value="1"/>
</dbReference>
<dbReference type="InterPro" id="IPR000454">
    <property type="entry name" value="ATP_synth_F0_csu"/>
</dbReference>
<dbReference type="InterPro" id="IPR020537">
    <property type="entry name" value="ATP_synth_F0_csu_DDCD_BS"/>
</dbReference>
<dbReference type="InterPro" id="IPR038662">
    <property type="entry name" value="ATP_synth_F0_csu_sf"/>
</dbReference>
<dbReference type="InterPro" id="IPR002379">
    <property type="entry name" value="ATPase_proteolipid_c-like_dom"/>
</dbReference>
<dbReference type="InterPro" id="IPR035921">
    <property type="entry name" value="F/V-ATP_Csub_sf"/>
</dbReference>
<dbReference type="NCBIfam" id="NF009997">
    <property type="entry name" value="PRK13467.1"/>
    <property type="match status" value="1"/>
</dbReference>
<dbReference type="Pfam" id="PF00137">
    <property type="entry name" value="ATP-synt_C"/>
    <property type="match status" value="1"/>
</dbReference>
<dbReference type="PRINTS" id="PR00124">
    <property type="entry name" value="ATPASEC"/>
</dbReference>
<dbReference type="SUPFAM" id="SSF81333">
    <property type="entry name" value="F1F0 ATP synthase subunit C"/>
    <property type="match status" value="1"/>
</dbReference>
<dbReference type="PROSITE" id="PS00605">
    <property type="entry name" value="ATPASE_C"/>
    <property type="match status" value="1"/>
</dbReference>
<keyword id="KW-0066">ATP synthesis</keyword>
<keyword id="KW-1003">Cell membrane</keyword>
<keyword id="KW-0138">CF(0)</keyword>
<keyword id="KW-0375">Hydrogen ion transport</keyword>
<keyword id="KW-0406">Ion transport</keyword>
<keyword id="KW-0446">Lipid-binding</keyword>
<keyword id="KW-0472">Membrane</keyword>
<keyword id="KW-0812">Transmembrane</keyword>
<keyword id="KW-1133">Transmembrane helix</keyword>
<keyword id="KW-0813">Transport</keyword>
<accession>C1CSD4</accession>
<proteinExistence type="inferred from homology"/>
<evidence type="ECO:0000255" key="1">
    <source>
        <dbReference type="HAMAP-Rule" id="MF_01396"/>
    </source>
</evidence>
<feature type="chain" id="PRO_1000184517" description="ATP synthase subunit c">
    <location>
        <begin position="1"/>
        <end position="66"/>
    </location>
</feature>
<feature type="transmembrane region" description="Helical" evidence="1">
    <location>
        <begin position="3"/>
        <end position="23"/>
    </location>
</feature>
<feature type="transmembrane region" description="Helical" evidence="1">
    <location>
        <begin position="45"/>
        <end position="65"/>
    </location>
</feature>
<feature type="site" description="Reversibly protonated during proton transport" evidence="1">
    <location>
        <position position="52"/>
    </location>
</feature>
<reference key="1">
    <citation type="journal article" date="2010" name="Genome Biol.">
        <title>Structure and dynamics of the pan-genome of Streptococcus pneumoniae and closely related species.</title>
        <authorList>
            <person name="Donati C."/>
            <person name="Hiller N.L."/>
            <person name="Tettelin H."/>
            <person name="Muzzi A."/>
            <person name="Croucher N.J."/>
            <person name="Angiuoli S.V."/>
            <person name="Oggioni M."/>
            <person name="Dunning Hotopp J.C."/>
            <person name="Hu F.Z."/>
            <person name="Riley D.R."/>
            <person name="Covacci A."/>
            <person name="Mitchell T.J."/>
            <person name="Bentley S.D."/>
            <person name="Kilian M."/>
            <person name="Ehrlich G.D."/>
            <person name="Rappuoli R."/>
            <person name="Moxon E.R."/>
            <person name="Masignani V."/>
        </authorList>
    </citation>
    <scope>NUCLEOTIDE SEQUENCE [LARGE SCALE GENOMIC DNA]</scope>
    <source>
        <strain>Taiwan19F-14</strain>
    </source>
</reference>
<organism>
    <name type="scientific">Streptococcus pneumoniae (strain Taiwan19F-14)</name>
    <dbReference type="NCBI Taxonomy" id="487213"/>
    <lineage>
        <taxon>Bacteria</taxon>
        <taxon>Bacillati</taxon>
        <taxon>Bacillota</taxon>
        <taxon>Bacilli</taxon>
        <taxon>Lactobacillales</taxon>
        <taxon>Streptococcaceae</taxon>
        <taxon>Streptococcus</taxon>
    </lineage>
</organism>
<name>ATPL_STRZT</name>
<gene>
    <name evidence="1" type="primary">atpE</name>
    <name type="ordered locus">SPT_1450</name>
</gene>
<comment type="function">
    <text evidence="1">F(1)F(0) ATP synthase produces ATP from ADP in the presence of a proton or sodium gradient. F-type ATPases consist of two structural domains, F(1) containing the extramembraneous catalytic core and F(0) containing the membrane proton channel, linked together by a central stalk and a peripheral stalk. During catalysis, ATP synthesis in the catalytic domain of F(1) is coupled via a rotary mechanism of the central stalk subunits to proton translocation.</text>
</comment>
<comment type="function">
    <text evidence="1">Key component of the F(0) channel; it plays a direct role in translocation across the membrane. A homomeric c-ring of between 10-14 subunits forms the central stalk rotor element with the F(1) delta and epsilon subunits.</text>
</comment>
<comment type="subunit">
    <text evidence="1">F-type ATPases have 2 components, F(1) - the catalytic core - and F(0) - the membrane proton channel. F(1) has five subunits: alpha(3), beta(3), gamma(1), delta(1), epsilon(1). F(0) has three main subunits: a(1), b(2) and c(10-14). The alpha and beta chains form an alternating ring which encloses part of the gamma chain. F(1) is attached to F(0) by a central stalk formed by the gamma and epsilon chains, while a peripheral stalk is formed by the delta and b chains.</text>
</comment>
<comment type="subcellular location">
    <subcellularLocation>
        <location evidence="1">Cell membrane</location>
        <topology evidence="1">Multi-pass membrane protein</topology>
    </subcellularLocation>
</comment>
<comment type="similarity">
    <text evidence="1">Belongs to the ATPase C chain family.</text>
</comment>
<sequence>MNLTFLGLCIACMGVSVGEGLLMNGLFKSVARQPDMLSEFRSLMFLGVAFIEGTFFVTLVFSFIIK</sequence>